<name>SYP_SHESM</name>
<proteinExistence type="inferred from homology"/>
<keyword id="KW-0030">Aminoacyl-tRNA synthetase</keyword>
<keyword id="KW-0067">ATP-binding</keyword>
<keyword id="KW-0963">Cytoplasm</keyword>
<keyword id="KW-0436">Ligase</keyword>
<keyword id="KW-0547">Nucleotide-binding</keyword>
<keyword id="KW-0648">Protein biosynthesis</keyword>
<comment type="function">
    <text evidence="1">Catalyzes the attachment of proline to tRNA(Pro) in a two-step reaction: proline is first activated by ATP to form Pro-AMP and then transferred to the acceptor end of tRNA(Pro). As ProRS can inadvertently accommodate and process non-cognate amino acids such as alanine and cysteine, to avoid such errors it has two additional distinct editing activities against alanine. One activity is designated as 'pretransfer' editing and involves the tRNA(Pro)-independent hydrolysis of activated Ala-AMP. The other activity is designated 'posttransfer' editing and involves deacylation of mischarged Ala-tRNA(Pro). The misacylated Cys-tRNA(Pro) is not edited by ProRS.</text>
</comment>
<comment type="catalytic activity">
    <reaction evidence="1">
        <text>tRNA(Pro) + L-proline + ATP = L-prolyl-tRNA(Pro) + AMP + diphosphate</text>
        <dbReference type="Rhea" id="RHEA:14305"/>
        <dbReference type="Rhea" id="RHEA-COMP:9700"/>
        <dbReference type="Rhea" id="RHEA-COMP:9702"/>
        <dbReference type="ChEBI" id="CHEBI:30616"/>
        <dbReference type="ChEBI" id="CHEBI:33019"/>
        <dbReference type="ChEBI" id="CHEBI:60039"/>
        <dbReference type="ChEBI" id="CHEBI:78442"/>
        <dbReference type="ChEBI" id="CHEBI:78532"/>
        <dbReference type="ChEBI" id="CHEBI:456215"/>
        <dbReference type="EC" id="6.1.1.15"/>
    </reaction>
</comment>
<comment type="subunit">
    <text evidence="1">Homodimer.</text>
</comment>
<comment type="subcellular location">
    <subcellularLocation>
        <location evidence="1">Cytoplasm</location>
    </subcellularLocation>
</comment>
<comment type="domain">
    <text evidence="1">Consists of three domains: the N-terminal catalytic domain, the editing domain and the C-terminal anticodon-binding domain.</text>
</comment>
<comment type="similarity">
    <text evidence="1">Belongs to the class-II aminoacyl-tRNA synthetase family. ProS type 1 subfamily.</text>
</comment>
<protein>
    <recommendedName>
        <fullName evidence="1">Proline--tRNA ligase</fullName>
        <ecNumber evidence="1">6.1.1.15</ecNumber>
    </recommendedName>
    <alternativeName>
        <fullName evidence="1">Prolyl-tRNA synthetase</fullName>
        <shortName evidence="1">ProRS</shortName>
    </alternativeName>
</protein>
<dbReference type="EC" id="6.1.1.15" evidence="1"/>
<dbReference type="EMBL" id="CP000446">
    <property type="protein sequence ID" value="ABI38423.1"/>
    <property type="molecule type" value="Genomic_DNA"/>
</dbReference>
<dbReference type="RefSeq" id="WP_011622129.1">
    <property type="nucleotide sequence ID" value="NC_008321.1"/>
</dbReference>
<dbReference type="SMR" id="Q0HKJ4"/>
<dbReference type="KEGG" id="she:Shewmr4_1345"/>
<dbReference type="HOGENOM" id="CLU_016739_0_0_6"/>
<dbReference type="GO" id="GO:0005829">
    <property type="term" value="C:cytosol"/>
    <property type="evidence" value="ECO:0007669"/>
    <property type="project" value="TreeGrafter"/>
</dbReference>
<dbReference type="GO" id="GO:0002161">
    <property type="term" value="F:aminoacyl-tRNA deacylase activity"/>
    <property type="evidence" value="ECO:0007669"/>
    <property type="project" value="InterPro"/>
</dbReference>
<dbReference type="GO" id="GO:0005524">
    <property type="term" value="F:ATP binding"/>
    <property type="evidence" value="ECO:0007669"/>
    <property type="project" value="UniProtKB-UniRule"/>
</dbReference>
<dbReference type="GO" id="GO:0004827">
    <property type="term" value="F:proline-tRNA ligase activity"/>
    <property type="evidence" value="ECO:0007669"/>
    <property type="project" value="UniProtKB-UniRule"/>
</dbReference>
<dbReference type="GO" id="GO:0006433">
    <property type="term" value="P:prolyl-tRNA aminoacylation"/>
    <property type="evidence" value="ECO:0007669"/>
    <property type="project" value="UniProtKB-UniRule"/>
</dbReference>
<dbReference type="CDD" id="cd04334">
    <property type="entry name" value="ProRS-INS"/>
    <property type="match status" value="1"/>
</dbReference>
<dbReference type="CDD" id="cd00861">
    <property type="entry name" value="ProRS_anticodon_short"/>
    <property type="match status" value="1"/>
</dbReference>
<dbReference type="CDD" id="cd00779">
    <property type="entry name" value="ProRS_core_prok"/>
    <property type="match status" value="1"/>
</dbReference>
<dbReference type="FunFam" id="3.30.930.10:FF:000043">
    <property type="entry name" value="Proline--tRNA ligase"/>
    <property type="match status" value="1"/>
</dbReference>
<dbReference type="FunFam" id="3.30.930.10:FF:000062">
    <property type="entry name" value="Proline--tRNA ligase"/>
    <property type="match status" value="1"/>
</dbReference>
<dbReference type="FunFam" id="3.40.50.800:FF:000006">
    <property type="entry name" value="Proline--tRNA ligase"/>
    <property type="match status" value="1"/>
</dbReference>
<dbReference type="FunFam" id="3.90.960.10:FF:000001">
    <property type="entry name" value="Proline--tRNA ligase"/>
    <property type="match status" value="1"/>
</dbReference>
<dbReference type="Gene3D" id="3.40.50.800">
    <property type="entry name" value="Anticodon-binding domain"/>
    <property type="match status" value="1"/>
</dbReference>
<dbReference type="Gene3D" id="3.30.930.10">
    <property type="entry name" value="Bira Bifunctional Protein, Domain 2"/>
    <property type="match status" value="2"/>
</dbReference>
<dbReference type="Gene3D" id="3.90.960.10">
    <property type="entry name" value="YbaK/aminoacyl-tRNA synthetase-associated domain"/>
    <property type="match status" value="1"/>
</dbReference>
<dbReference type="HAMAP" id="MF_01569">
    <property type="entry name" value="Pro_tRNA_synth_type1"/>
    <property type="match status" value="1"/>
</dbReference>
<dbReference type="InterPro" id="IPR002314">
    <property type="entry name" value="aa-tRNA-synt_IIb"/>
</dbReference>
<dbReference type="InterPro" id="IPR006195">
    <property type="entry name" value="aa-tRNA-synth_II"/>
</dbReference>
<dbReference type="InterPro" id="IPR045864">
    <property type="entry name" value="aa-tRNA-synth_II/BPL/LPL"/>
</dbReference>
<dbReference type="InterPro" id="IPR004154">
    <property type="entry name" value="Anticodon-bd"/>
</dbReference>
<dbReference type="InterPro" id="IPR036621">
    <property type="entry name" value="Anticodon-bd_dom_sf"/>
</dbReference>
<dbReference type="InterPro" id="IPR002316">
    <property type="entry name" value="Pro-tRNA-ligase_IIa"/>
</dbReference>
<dbReference type="InterPro" id="IPR004500">
    <property type="entry name" value="Pro-tRNA-synth_IIa_bac-type"/>
</dbReference>
<dbReference type="InterPro" id="IPR023717">
    <property type="entry name" value="Pro-tRNA-Synthase_IIa_type1"/>
</dbReference>
<dbReference type="InterPro" id="IPR050062">
    <property type="entry name" value="Pro-tRNA_synthetase"/>
</dbReference>
<dbReference type="InterPro" id="IPR044140">
    <property type="entry name" value="ProRS_anticodon_short"/>
</dbReference>
<dbReference type="InterPro" id="IPR033730">
    <property type="entry name" value="ProRS_core_prok"/>
</dbReference>
<dbReference type="InterPro" id="IPR036754">
    <property type="entry name" value="YbaK/aa-tRNA-synt-asso_dom_sf"/>
</dbReference>
<dbReference type="InterPro" id="IPR007214">
    <property type="entry name" value="YbaK/aa-tRNA-synth-assoc-dom"/>
</dbReference>
<dbReference type="NCBIfam" id="NF006625">
    <property type="entry name" value="PRK09194.1"/>
    <property type="match status" value="1"/>
</dbReference>
<dbReference type="NCBIfam" id="TIGR00409">
    <property type="entry name" value="proS_fam_II"/>
    <property type="match status" value="1"/>
</dbReference>
<dbReference type="PANTHER" id="PTHR42753">
    <property type="entry name" value="MITOCHONDRIAL RIBOSOME PROTEIN L39/PROLYL-TRNA LIGASE FAMILY MEMBER"/>
    <property type="match status" value="1"/>
</dbReference>
<dbReference type="PANTHER" id="PTHR42753:SF2">
    <property type="entry name" value="PROLINE--TRNA LIGASE"/>
    <property type="match status" value="1"/>
</dbReference>
<dbReference type="Pfam" id="PF03129">
    <property type="entry name" value="HGTP_anticodon"/>
    <property type="match status" value="1"/>
</dbReference>
<dbReference type="Pfam" id="PF00587">
    <property type="entry name" value="tRNA-synt_2b"/>
    <property type="match status" value="1"/>
</dbReference>
<dbReference type="Pfam" id="PF04073">
    <property type="entry name" value="tRNA_edit"/>
    <property type="match status" value="1"/>
</dbReference>
<dbReference type="PIRSF" id="PIRSF001535">
    <property type="entry name" value="ProRS_1"/>
    <property type="match status" value="1"/>
</dbReference>
<dbReference type="PRINTS" id="PR01046">
    <property type="entry name" value="TRNASYNTHPRO"/>
</dbReference>
<dbReference type="SUPFAM" id="SSF52954">
    <property type="entry name" value="Class II aaRS ABD-related"/>
    <property type="match status" value="1"/>
</dbReference>
<dbReference type="SUPFAM" id="SSF55681">
    <property type="entry name" value="Class II aaRS and biotin synthetases"/>
    <property type="match status" value="1"/>
</dbReference>
<dbReference type="SUPFAM" id="SSF55826">
    <property type="entry name" value="YbaK/ProRS associated domain"/>
    <property type="match status" value="1"/>
</dbReference>
<dbReference type="PROSITE" id="PS50862">
    <property type="entry name" value="AA_TRNA_LIGASE_II"/>
    <property type="match status" value="1"/>
</dbReference>
<accession>Q0HKJ4</accession>
<organism>
    <name type="scientific">Shewanella sp. (strain MR-4)</name>
    <dbReference type="NCBI Taxonomy" id="60480"/>
    <lineage>
        <taxon>Bacteria</taxon>
        <taxon>Pseudomonadati</taxon>
        <taxon>Pseudomonadota</taxon>
        <taxon>Gammaproteobacteria</taxon>
        <taxon>Alteromonadales</taxon>
        <taxon>Shewanellaceae</taxon>
        <taxon>Shewanella</taxon>
    </lineage>
</organism>
<evidence type="ECO:0000255" key="1">
    <source>
        <dbReference type="HAMAP-Rule" id="MF_01569"/>
    </source>
</evidence>
<gene>
    <name evidence="1" type="primary">proS</name>
    <name type="ordered locus">Shewmr4_1345</name>
</gene>
<sequence length="570" mass="63196">MRVSKYLLSTQKETPANAEVISHQLMLRAGMIRRNASGLYSYLPTGLRVLRKVEAIVREEMNKAGAIEILMPMVQPADLWVETGRWDKFGPELLRFKDRHNRDFVLGPTHEEVITDLIRKEVSSYKQLPLNLYQIQTKFRDEVRPRFGVMRSREFLMKDAYSFHLDVDTMNETYEAMYQAYSNILSRMGLAFRPVLADTGSIGGSMSHEFHVLAQSGEDLIAYSTGSDYAANIEKAESPMPTEARGAATEELRLVDTPNAKTIAELVEQFGLDITKTVKTLIVKGATEEAPLVALIVRGDHELNEIKADKLDLVASPLEFAPEALIRDAIGAGPGSLGPVGLNMPIIIDHSVSVMSDFAAGANQDDKHYFGINWERDLPLAQAADIRNVVEGEPTPDGLGTYAMARGIEVGHIFQLGTNYSKSMNATVLDENGKSQVLLMGCYGVGVSRIVAAAIEQNFDDRGIVWPEAIAPFSVGILPMNMHKSHRVTDIAEQLYKDLSAAGIDVLLDDRKERPGVMFADMELIGIPHTVVIGDRNIDAGVFEYKNRRTGEKQDVPFDQIVDFLKNLQA</sequence>
<feature type="chain" id="PRO_0000288377" description="Proline--tRNA ligase">
    <location>
        <begin position="1"/>
        <end position="570"/>
    </location>
</feature>
<reference key="1">
    <citation type="submission" date="2006-08" db="EMBL/GenBank/DDBJ databases">
        <title>Complete sequence of Shewanella sp. MR-4.</title>
        <authorList>
            <consortium name="US DOE Joint Genome Institute"/>
            <person name="Copeland A."/>
            <person name="Lucas S."/>
            <person name="Lapidus A."/>
            <person name="Barry K."/>
            <person name="Detter J.C."/>
            <person name="Glavina del Rio T."/>
            <person name="Hammon N."/>
            <person name="Israni S."/>
            <person name="Dalin E."/>
            <person name="Tice H."/>
            <person name="Pitluck S."/>
            <person name="Kiss H."/>
            <person name="Brettin T."/>
            <person name="Bruce D."/>
            <person name="Han C."/>
            <person name="Tapia R."/>
            <person name="Gilna P."/>
            <person name="Schmutz J."/>
            <person name="Larimer F."/>
            <person name="Land M."/>
            <person name="Hauser L."/>
            <person name="Kyrpides N."/>
            <person name="Mikhailova N."/>
            <person name="Nealson K."/>
            <person name="Konstantinidis K."/>
            <person name="Klappenbach J."/>
            <person name="Tiedje J."/>
            <person name="Richardson P."/>
        </authorList>
    </citation>
    <scope>NUCLEOTIDE SEQUENCE [LARGE SCALE GENOMIC DNA]</scope>
    <source>
        <strain>MR-4</strain>
    </source>
</reference>